<proteinExistence type="evidence at protein level"/>
<accession>Q9UXF8</accession>
<dbReference type="EMBL" id="Y18930">
    <property type="protein sequence ID" value="CAB57532.1"/>
    <property type="molecule type" value="Genomic_DNA"/>
</dbReference>
<dbReference type="EMBL" id="AE006641">
    <property type="protein sequence ID" value="AAK41068.1"/>
    <property type="molecule type" value="Genomic_DNA"/>
</dbReference>
<dbReference type="PIR" id="E90226">
    <property type="entry name" value="E90226"/>
</dbReference>
<dbReference type="RefSeq" id="WP_009991361.1">
    <property type="nucleotide sequence ID" value="NC_002754.1"/>
</dbReference>
<dbReference type="SMR" id="Q9UXF8"/>
<dbReference type="DIP" id="DIP-48852N"/>
<dbReference type="FunCoup" id="Q9UXF8">
    <property type="interactions" value="82"/>
</dbReference>
<dbReference type="IntAct" id="Q9UXF8">
    <property type="interactions" value="1"/>
</dbReference>
<dbReference type="STRING" id="273057.SSO0771"/>
<dbReference type="PaxDb" id="273057-SSO0771"/>
<dbReference type="EnsemblBacteria" id="AAK41068">
    <property type="protein sequence ID" value="AAK41068"/>
    <property type="gene ID" value="SSO0771"/>
</dbReference>
<dbReference type="KEGG" id="sso:SSO0771"/>
<dbReference type="PATRIC" id="fig|273057.12.peg.771"/>
<dbReference type="eggNOG" id="arCOG00467">
    <property type="taxonomic scope" value="Archaea"/>
</dbReference>
<dbReference type="HOGENOM" id="CLU_025112_3_2_2"/>
<dbReference type="InParanoid" id="Q9UXF8"/>
<dbReference type="PhylomeDB" id="Q9UXF8"/>
<dbReference type="Proteomes" id="UP000001974">
    <property type="component" value="Chromosome"/>
</dbReference>
<dbReference type="GO" id="GO:0005524">
    <property type="term" value="F:ATP binding"/>
    <property type="evidence" value="ECO:0007669"/>
    <property type="project" value="UniProtKB-UniRule"/>
</dbReference>
<dbReference type="GO" id="GO:0016887">
    <property type="term" value="F:ATP hydrolysis activity"/>
    <property type="evidence" value="ECO:0007669"/>
    <property type="project" value="InterPro"/>
</dbReference>
<dbReference type="GO" id="GO:0003677">
    <property type="term" value="F:DNA binding"/>
    <property type="evidence" value="ECO:0007669"/>
    <property type="project" value="UniProtKB-KW"/>
</dbReference>
<dbReference type="GO" id="GO:0006260">
    <property type="term" value="P:DNA replication"/>
    <property type="evidence" value="ECO:0007669"/>
    <property type="project" value="UniProtKB-UniRule"/>
</dbReference>
<dbReference type="CDD" id="cd08768">
    <property type="entry name" value="Cdc6_C"/>
    <property type="match status" value="1"/>
</dbReference>
<dbReference type="FunFam" id="1.10.10.10:FF:001232">
    <property type="entry name" value="ORC1-type DNA replication protein"/>
    <property type="match status" value="1"/>
</dbReference>
<dbReference type="Gene3D" id="1.10.8.60">
    <property type="match status" value="1"/>
</dbReference>
<dbReference type="Gene3D" id="3.40.50.300">
    <property type="entry name" value="P-loop containing nucleotide triphosphate hydrolases"/>
    <property type="match status" value="1"/>
</dbReference>
<dbReference type="Gene3D" id="1.10.10.10">
    <property type="entry name" value="Winged helix-like DNA-binding domain superfamily/Winged helix DNA-binding domain"/>
    <property type="match status" value="1"/>
</dbReference>
<dbReference type="HAMAP" id="MF_01407">
    <property type="entry name" value="ORC1_type_DNA_replic_protein"/>
    <property type="match status" value="1"/>
</dbReference>
<dbReference type="InterPro" id="IPR003593">
    <property type="entry name" value="AAA+_ATPase"/>
</dbReference>
<dbReference type="InterPro" id="IPR049945">
    <property type="entry name" value="AAA_22"/>
</dbReference>
<dbReference type="InterPro" id="IPR015163">
    <property type="entry name" value="Cdc6_C"/>
</dbReference>
<dbReference type="InterPro" id="IPR055237">
    <property type="entry name" value="Cdc6_lid"/>
</dbReference>
<dbReference type="InterPro" id="IPR050311">
    <property type="entry name" value="ORC1/CDC6"/>
</dbReference>
<dbReference type="InterPro" id="IPR014277">
    <property type="entry name" value="Orc1/Cdc6_arc"/>
</dbReference>
<dbReference type="InterPro" id="IPR027417">
    <property type="entry name" value="P-loop_NTPase"/>
</dbReference>
<dbReference type="InterPro" id="IPR036388">
    <property type="entry name" value="WH-like_DNA-bd_sf"/>
</dbReference>
<dbReference type="InterPro" id="IPR036390">
    <property type="entry name" value="WH_DNA-bd_sf"/>
</dbReference>
<dbReference type="NCBIfam" id="TIGR02928">
    <property type="entry name" value="orc1/cdc6 family replication initiation protein"/>
    <property type="match status" value="1"/>
</dbReference>
<dbReference type="NCBIfam" id="NF001623">
    <property type="entry name" value="PRK00411.1-1"/>
    <property type="match status" value="1"/>
</dbReference>
<dbReference type="PANTHER" id="PTHR10763">
    <property type="entry name" value="CELL DIVISION CONTROL PROTEIN 6-RELATED"/>
    <property type="match status" value="1"/>
</dbReference>
<dbReference type="PANTHER" id="PTHR10763:SF31">
    <property type="entry name" value="ORC1-TYPE DNA REPLICATION PROTEIN 2"/>
    <property type="match status" value="1"/>
</dbReference>
<dbReference type="Pfam" id="PF13401">
    <property type="entry name" value="AAA_22"/>
    <property type="match status" value="1"/>
</dbReference>
<dbReference type="Pfam" id="PF09079">
    <property type="entry name" value="Cdc6_C"/>
    <property type="match status" value="1"/>
</dbReference>
<dbReference type="Pfam" id="PF22703">
    <property type="entry name" value="Cdc6_lid"/>
    <property type="match status" value="1"/>
</dbReference>
<dbReference type="SMART" id="SM00382">
    <property type="entry name" value="AAA"/>
    <property type="match status" value="1"/>
</dbReference>
<dbReference type="SMART" id="SM01074">
    <property type="entry name" value="Cdc6_C"/>
    <property type="match status" value="1"/>
</dbReference>
<dbReference type="SUPFAM" id="SSF52540">
    <property type="entry name" value="P-loop containing nucleoside triphosphate hydrolases"/>
    <property type="match status" value="1"/>
</dbReference>
<dbReference type="SUPFAM" id="SSF46785">
    <property type="entry name" value="Winged helix' DNA-binding domain"/>
    <property type="match status" value="1"/>
</dbReference>
<name>CDC62_SACS2</name>
<comment type="function">
    <text evidence="1 2 3 5 6 7">Involved in regulation of DNA replication. May play essential roles in origin recognition and cell cycle control of replication. Binds both single-stranded and double-stranded DNA, with a preference for molecules that contain a bubble, a fork, or a tail. Has a weak ATPase activity. Stimulates the binding of the MCM helicase to the origin DNA, but strongly inhibits ATPase and DNA helicase activities of MCM. Also regulates the DNA polymerase and the nuclease activities of PolB1.</text>
</comment>
<comment type="subunit">
    <text evidence="2 3 4 5 6 7">Monomer. Interacts with Cdc6-3, MCM and PolB1.</text>
</comment>
<comment type="interaction">
    <interactant intactId="EBI-15778726">
        <id>Q9UXF8</id>
    </interactant>
    <interactant intactId="EBI-15778666">
        <id>P26811</id>
        <label>dpo1</label>
    </interactant>
    <organismsDiffer>false</organismsDiffer>
    <experiments>5</experiments>
</comment>
<comment type="domain">
    <text evidence="5">The C-terminal WH domain is essential for its stimulating effect on the MCM-loading activity.</text>
</comment>
<comment type="PTM">
    <text>Autophosphorylated in vitro.</text>
</comment>
<comment type="similarity">
    <text evidence="1">Belongs to the CDC6/cdc18 family.</text>
</comment>
<feature type="chain" id="PRO_0000151019" description="ORC1-type DNA replication protein 2">
    <location>
        <begin position="1"/>
        <end position="413"/>
    </location>
</feature>
<feature type="binding site" evidence="1">
    <location>
        <begin position="70"/>
        <end position="74"/>
    </location>
    <ligand>
        <name>ATP</name>
        <dbReference type="ChEBI" id="CHEBI:30616"/>
    </ligand>
</feature>
<feature type="binding site" evidence="1">
    <location>
        <position position="217"/>
    </location>
    <ligand>
        <name>ATP</name>
        <dbReference type="ChEBI" id="CHEBI:30616"/>
    </ligand>
</feature>
<feature type="binding site" evidence="1">
    <location>
        <position position="229"/>
    </location>
    <ligand>
        <name>ATP</name>
        <dbReference type="ChEBI" id="CHEBI:30616"/>
    </ligand>
</feature>
<feature type="mutagenesis site" description="Loss of ATPase activity. Loss of autophosphorylation." evidence="2">
    <original>K</original>
    <variation>A</variation>
    <location>
        <position position="72"/>
    </location>
</feature>
<gene>
    <name type="primary">cdc6-2</name>
    <name type="ordered locus">SSO0771</name>
</gene>
<organism>
    <name type="scientific">Saccharolobus solfataricus (strain ATCC 35092 / DSM 1617 / JCM 11322 / P2)</name>
    <name type="common">Sulfolobus solfataricus</name>
    <dbReference type="NCBI Taxonomy" id="273057"/>
    <lineage>
        <taxon>Archaea</taxon>
        <taxon>Thermoproteota</taxon>
        <taxon>Thermoprotei</taxon>
        <taxon>Sulfolobales</taxon>
        <taxon>Sulfolobaceae</taxon>
        <taxon>Saccharolobus</taxon>
    </lineage>
</organism>
<reference key="1">
    <citation type="journal article" date="2000" name="Genome">
        <title>Gene content and organization of a 281-kbp contig from the genome of the extremely thermophilic archaeon, Sulfolobus solfataricus P2.</title>
        <authorList>
            <person name="Charlebois R.L."/>
            <person name="Singh R.K."/>
            <person name="Chan-Weiher C.C.-Y."/>
            <person name="Allard G."/>
            <person name="Chow C."/>
            <person name="Confalonieri F."/>
            <person name="Curtis B."/>
            <person name="Duguet M."/>
            <person name="Erauso G."/>
            <person name="Faguy D."/>
            <person name="Gaasterland T."/>
            <person name="Garrett R.A."/>
            <person name="Gordon P."/>
            <person name="Jeffries A.C."/>
            <person name="Kozera C."/>
            <person name="Kushwaha N."/>
            <person name="Lafleur E."/>
            <person name="Medina N."/>
            <person name="Peng X."/>
            <person name="Penny S.L."/>
            <person name="She Q."/>
            <person name="St Jean A."/>
            <person name="van der Oost J."/>
            <person name="Young F."/>
            <person name="Zivanovic Y."/>
            <person name="Doolittle W.F."/>
            <person name="Ragan M.A."/>
            <person name="Sensen C.W."/>
        </authorList>
    </citation>
    <scope>NUCLEOTIDE SEQUENCE [LARGE SCALE GENOMIC DNA]</scope>
    <source>
        <strain>ATCC 35092 / DSM 1617 / JCM 11322 / P2</strain>
    </source>
</reference>
<reference key="2">
    <citation type="journal article" date="2001" name="Proc. Natl. Acad. Sci. U.S.A.">
        <title>The complete genome of the crenarchaeon Sulfolobus solfataricus P2.</title>
        <authorList>
            <person name="She Q."/>
            <person name="Singh R.K."/>
            <person name="Confalonieri F."/>
            <person name="Zivanovic Y."/>
            <person name="Allard G."/>
            <person name="Awayez M.J."/>
            <person name="Chan-Weiher C.C.-Y."/>
            <person name="Clausen I.G."/>
            <person name="Curtis B.A."/>
            <person name="De Moors A."/>
            <person name="Erauso G."/>
            <person name="Fletcher C."/>
            <person name="Gordon P.M.K."/>
            <person name="Heikamp-de Jong I."/>
            <person name="Jeffries A.C."/>
            <person name="Kozera C.J."/>
            <person name="Medina N."/>
            <person name="Peng X."/>
            <person name="Thi-Ngoc H.P."/>
            <person name="Redder P."/>
            <person name="Schenk M.E."/>
            <person name="Theriault C."/>
            <person name="Tolstrup N."/>
            <person name="Charlebois R.L."/>
            <person name="Doolittle W.F."/>
            <person name="Duguet M."/>
            <person name="Gaasterland T."/>
            <person name="Garrett R.A."/>
            <person name="Ragan M.A."/>
            <person name="Sensen C.W."/>
            <person name="Van der Oost J."/>
        </authorList>
    </citation>
    <scope>NUCLEOTIDE SEQUENCE [LARGE SCALE GENOMIC DNA]</scope>
    <source>
        <strain>ATCC 35092 / DSM 1617 / JCM 11322 / P2</strain>
    </source>
</reference>
<reference key="3">
    <citation type="journal article" date="2003" name="J. Biol. Chem.">
        <title>Biochemical characterization of a CDC6-like protein from the crenarchaeon Sulfolobus solfataricus.</title>
        <authorList>
            <person name="De Felice M."/>
            <person name="Esposito L."/>
            <person name="Pucci B."/>
            <person name="Carpentieri F."/>
            <person name="De Falco M."/>
            <person name="Rossi M."/>
            <person name="Pisani F.M."/>
        </authorList>
    </citation>
    <scope>FUNCTION</scope>
    <scope>SUBUNIT</scope>
    <scope>AUTOPHOSPHORYLATION</scope>
    <scope>DNA-BINDING</scope>
    <scope>MUTAGENESIS OF LYS-72</scope>
</reference>
<reference key="4">
    <citation type="journal article" date="2004" name="J. Biol. Chem.">
        <title>A CDC6-like factor from the archaea Sulfolobus solfataricus promotes binding of the mini-chromosome maintenance complex to DNA.</title>
        <authorList>
            <person name="De Felice M."/>
            <person name="Esposito L."/>
            <person name="Pucci B."/>
            <person name="De Falco M."/>
            <person name="Rossi M."/>
            <person name="Pisani F.M."/>
        </authorList>
    </citation>
    <scope>FUNCTION</scope>
    <scope>DNA-BINDING</scope>
    <scope>INTERACTION WITH MCM</scope>
</reference>
<reference key="5">
    <citation type="journal article" date="2006" name="Extremophiles">
        <title>Biochemical characterization of two Cdc6/ORC1-like proteins from the crenarchaeon Sulfolobus solfataricus.</title>
        <authorList>
            <person name="De Felice M."/>
            <person name="Esposito L."/>
            <person name="Rossi M."/>
            <person name="Pisani F.M."/>
        </authorList>
    </citation>
    <scope>INTERACTION WITH CDC6-3</scope>
    <source>
        <strain>ATCC 35092 / DSM 1617 / JCM 11322 / P2</strain>
    </source>
</reference>
<reference key="6">
    <citation type="journal article" date="2007" name="Biochem. Biophys. Res. Commun.">
        <title>Divergent functions of multiple eukaryote-like Orc1/Cdc6 proteins on modulating the loading of the MCM helicase onto the origins of the hyperthermophilic archaeon Sulfolobus solfataricus P2.</title>
        <authorList>
            <person name="Jiang P.X."/>
            <person name="Wang J."/>
            <person name="Feng Y."/>
            <person name="He Z.G."/>
        </authorList>
    </citation>
    <scope>FUNCTION</scope>
    <scope>INTERACTION WITH MCM</scope>
    <scope>DOMAIN</scope>
</reference>
<reference key="7">
    <citation type="journal article" date="2007" name="Biochem. Biophys. Res. Commun.">
        <title>Three eukaryote-like Orc1/Cdc6 proteins functionally interact and mutually regulate their activities of binding to the replication origin in the hyperthermophilic archaeon Sulfolobus solfataricus P2.</title>
        <authorList>
            <person name="Wang J."/>
            <person name="Jiang P.X."/>
            <person name="Feng H."/>
            <person name="Feng Y."/>
            <person name="He Z.G."/>
        </authorList>
    </citation>
    <scope>FUNCTION</scope>
    <scope>INTERACTION WITH CDC6-3</scope>
    <source>
        <strain>ATCC 35092 / DSM 1617 / JCM 11322 / P2</strain>
    </source>
</reference>
<reference key="8">
    <citation type="journal article" date="2009" name="Proc. Natl. Acad. Sci. U.S.A.">
        <title>Archaeal eukaryote-like Orc1/Cdc6 initiators physically interact with DNA polymerase B1 and regulate its functions.</title>
        <authorList>
            <person name="Zhang L."/>
            <person name="Zhang L."/>
            <person name="Liu Y."/>
            <person name="Yang S."/>
            <person name="Gao C."/>
            <person name="Gong H."/>
            <person name="Feng Y."/>
            <person name="He Z.G."/>
        </authorList>
    </citation>
    <scope>FUNCTION</scope>
    <scope>INTERACTION WITH POLB1</scope>
</reference>
<sequence length="413" mass="47533">MVSAKDILSDSLRSSVLIIKHKDKLSPDYVPENLPHREEKIKELGFIFKDLLAGDAKDSERVVILGRTGTGKTATVRLFGKNFEDIAEREYGVKVKYVHINCYRHRTLYLISQEIANALKLPIPSRGLSAQEVFKMIHEYLDRRNIHLIVALDEFGHFLNTANTEEIYFLVRLYDEISAIIKRISYIFIVNESHSIYKLDRSIRDHIARRLIEFPPYKSMELYDILKYRVDEAFNDNAVDDEVLQFISNTYGYDKGGNGNARIAIETLSLAGEIAEKEGSPVVLLDHAKKANSTINPEIQEIIDSLSYLDLHQLILLKALIRALNKTKADEITMGTLEEEYISLSREFNEEPRRHTQVYEYLRKLKVIGIINTRQSGKGMRGRTTLVSLSLPLDKRLDDYIMQQIMVRLKSRA</sequence>
<keyword id="KW-0067">ATP-binding</keyword>
<keyword id="KW-0235">DNA replication</keyword>
<keyword id="KW-0238">DNA-binding</keyword>
<keyword id="KW-0547">Nucleotide-binding</keyword>
<keyword id="KW-1185">Reference proteome</keyword>
<evidence type="ECO:0000255" key="1">
    <source>
        <dbReference type="HAMAP-Rule" id="MF_01407"/>
    </source>
</evidence>
<evidence type="ECO:0000269" key="2">
    <source>
    </source>
</evidence>
<evidence type="ECO:0000269" key="3">
    <source>
    </source>
</evidence>
<evidence type="ECO:0000269" key="4">
    <source>
    </source>
</evidence>
<evidence type="ECO:0000269" key="5">
    <source>
    </source>
</evidence>
<evidence type="ECO:0000269" key="6">
    <source>
    </source>
</evidence>
<evidence type="ECO:0000269" key="7">
    <source>
    </source>
</evidence>
<protein>
    <recommendedName>
        <fullName evidence="1">ORC1-type DNA replication protein 2</fullName>
    </recommendedName>
</protein>